<evidence type="ECO:0000255" key="1">
    <source>
        <dbReference type="HAMAP-Rule" id="MF_00503"/>
    </source>
</evidence>
<evidence type="ECO:0000305" key="2"/>
<sequence length="150" mass="15943">MKLILTAAVENLGVAGDIVEVKDGYGRNLLLPRGLAIPATPGAEKQIEGIKRAQEARAIRDLDHAREVKAQLEALEGVKVAVRTSESGKLFGSVKADDIVDAVKAAGGPNLDKRAIVLPKNLVKTTGKYQVEAKIHEGIVSRVKFEVVAA</sequence>
<reference key="1">
    <citation type="journal article" date="2003" name="Genome Res.">
        <title>Comparative complete genome sequence analysis of the amino acid replacements responsible for the thermostability of Corynebacterium efficiens.</title>
        <authorList>
            <person name="Nishio Y."/>
            <person name="Nakamura Y."/>
            <person name="Kawarabayasi Y."/>
            <person name="Usuda Y."/>
            <person name="Kimura E."/>
            <person name="Sugimoto S."/>
            <person name="Matsui K."/>
            <person name="Yamagishi A."/>
            <person name="Kikuchi H."/>
            <person name="Ikeo K."/>
            <person name="Gojobori T."/>
        </authorList>
    </citation>
    <scope>NUCLEOTIDE SEQUENCE [LARGE SCALE GENOMIC DNA]</scope>
    <source>
        <strain>DSM 44549 / YS-314 / AJ 12310 / JCM 11189 / NBRC 100395</strain>
    </source>
</reference>
<gene>
    <name evidence="1" type="primary">rplI</name>
    <name type="ordered locus">CE2818</name>
</gene>
<name>RL9_COREF</name>
<organism>
    <name type="scientific">Corynebacterium efficiens (strain DSM 44549 / YS-314 / AJ 12310 / JCM 11189 / NBRC 100395)</name>
    <dbReference type="NCBI Taxonomy" id="196164"/>
    <lineage>
        <taxon>Bacteria</taxon>
        <taxon>Bacillati</taxon>
        <taxon>Actinomycetota</taxon>
        <taxon>Actinomycetes</taxon>
        <taxon>Mycobacteriales</taxon>
        <taxon>Corynebacteriaceae</taxon>
        <taxon>Corynebacterium</taxon>
    </lineage>
</organism>
<dbReference type="EMBL" id="BA000035">
    <property type="protein sequence ID" value="BAC19628.1"/>
    <property type="molecule type" value="Genomic_DNA"/>
</dbReference>
<dbReference type="RefSeq" id="WP_006768826.1">
    <property type="nucleotide sequence ID" value="NC_004369.1"/>
</dbReference>
<dbReference type="SMR" id="Q8FLQ0"/>
<dbReference type="STRING" id="196164.gene:10743268"/>
<dbReference type="KEGG" id="cef:CE2818"/>
<dbReference type="eggNOG" id="COG0359">
    <property type="taxonomic scope" value="Bacteria"/>
</dbReference>
<dbReference type="HOGENOM" id="CLU_078938_5_1_11"/>
<dbReference type="OrthoDB" id="9788336at2"/>
<dbReference type="Proteomes" id="UP000001409">
    <property type="component" value="Chromosome"/>
</dbReference>
<dbReference type="GO" id="GO:1990904">
    <property type="term" value="C:ribonucleoprotein complex"/>
    <property type="evidence" value="ECO:0007669"/>
    <property type="project" value="UniProtKB-KW"/>
</dbReference>
<dbReference type="GO" id="GO:0005840">
    <property type="term" value="C:ribosome"/>
    <property type="evidence" value="ECO:0007669"/>
    <property type="project" value="UniProtKB-KW"/>
</dbReference>
<dbReference type="GO" id="GO:0019843">
    <property type="term" value="F:rRNA binding"/>
    <property type="evidence" value="ECO:0007669"/>
    <property type="project" value="UniProtKB-UniRule"/>
</dbReference>
<dbReference type="GO" id="GO:0003735">
    <property type="term" value="F:structural constituent of ribosome"/>
    <property type="evidence" value="ECO:0007669"/>
    <property type="project" value="InterPro"/>
</dbReference>
<dbReference type="GO" id="GO:0006412">
    <property type="term" value="P:translation"/>
    <property type="evidence" value="ECO:0007669"/>
    <property type="project" value="UniProtKB-UniRule"/>
</dbReference>
<dbReference type="FunFam" id="3.40.5.10:FF:000003">
    <property type="entry name" value="50S ribosomal protein L9"/>
    <property type="match status" value="1"/>
</dbReference>
<dbReference type="Gene3D" id="3.10.430.100">
    <property type="entry name" value="Ribosomal protein L9, C-terminal domain"/>
    <property type="match status" value="1"/>
</dbReference>
<dbReference type="Gene3D" id="3.40.5.10">
    <property type="entry name" value="Ribosomal protein L9, N-terminal domain"/>
    <property type="match status" value="1"/>
</dbReference>
<dbReference type="HAMAP" id="MF_00503">
    <property type="entry name" value="Ribosomal_bL9"/>
    <property type="match status" value="1"/>
</dbReference>
<dbReference type="InterPro" id="IPR000244">
    <property type="entry name" value="Ribosomal_bL9"/>
</dbReference>
<dbReference type="InterPro" id="IPR009027">
    <property type="entry name" value="Ribosomal_bL9/RNase_H1_N"/>
</dbReference>
<dbReference type="InterPro" id="IPR020594">
    <property type="entry name" value="Ribosomal_bL9_bac/chp"/>
</dbReference>
<dbReference type="InterPro" id="IPR020069">
    <property type="entry name" value="Ribosomal_bL9_C"/>
</dbReference>
<dbReference type="InterPro" id="IPR036791">
    <property type="entry name" value="Ribosomal_bL9_C_sf"/>
</dbReference>
<dbReference type="InterPro" id="IPR020070">
    <property type="entry name" value="Ribosomal_bL9_N"/>
</dbReference>
<dbReference type="InterPro" id="IPR036935">
    <property type="entry name" value="Ribosomal_bL9_N_sf"/>
</dbReference>
<dbReference type="NCBIfam" id="TIGR00158">
    <property type="entry name" value="L9"/>
    <property type="match status" value="1"/>
</dbReference>
<dbReference type="PANTHER" id="PTHR21368">
    <property type="entry name" value="50S RIBOSOMAL PROTEIN L9"/>
    <property type="match status" value="1"/>
</dbReference>
<dbReference type="Pfam" id="PF03948">
    <property type="entry name" value="Ribosomal_L9_C"/>
    <property type="match status" value="1"/>
</dbReference>
<dbReference type="Pfam" id="PF01281">
    <property type="entry name" value="Ribosomal_L9_N"/>
    <property type="match status" value="1"/>
</dbReference>
<dbReference type="SUPFAM" id="SSF55658">
    <property type="entry name" value="L9 N-domain-like"/>
    <property type="match status" value="1"/>
</dbReference>
<dbReference type="SUPFAM" id="SSF55653">
    <property type="entry name" value="Ribosomal protein L9 C-domain"/>
    <property type="match status" value="1"/>
</dbReference>
<dbReference type="PROSITE" id="PS00651">
    <property type="entry name" value="RIBOSOMAL_L9"/>
    <property type="match status" value="1"/>
</dbReference>
<accession>Q8FLQ0</accession>
<proteinExistence type="inferred from homology"/>
<feature type="chain" id="PRO_0000236511" description="Large ribosomal subunit protein bL9">
    <location>
        <begin position="1"/>
        <end position="150"/>
    </location>
</feature>
<comment type="function">
    <text evidence="1">Binds to the 23S rRNA.</text>
</comment>
<comment type="similarity">
    <text evidence="1">Belongs to the bacterial ribosomal protein bL9 family.</text>
</comment>
<keyword id="KW-1185">Reference proteome</keyword>
<keyword id="KW-0687">Ribonucleoprotein</keyword>
<keyword id="KW-0689">Ribosomal protein</keyword>
<keyword id="KW-0694">RNA-binding</keyword>
<keyword id="KW-0699">rRNA-binding</keyword>
<protein>
    <recommendedName>
        <fullName evidence="1">Large ribosomal subunit protein bL9</fullName>
    </recommendedName>
    <alternativeName>
        <fullName evidence="2">50S ribosomal protein L9</fullName>
    </alternativeName>
</protein>